<proteinExistence type="inferred from homology"/>
<evidence type="ECO:0000255" key="1">
    <source>
        <dbReference type="HAMAP-Rule" id="MF_00636"/>
    </source>
</evidence>
<keyword id="KW-0067">ATP-binding</keyword>
<keyword id="KW-0342">GTP-binding</keyword>
<keyword id="KW-0547">Nucleotide-binding</keyword>
<protein>
    <recommendedName>
        <fullName evidence="1">Nucleotide-binding protein XOO1179</fullName>
    </recommendedName>
</protein>
<feature type="chain" id="PRO_0000259018" description="Nucleotide-binding protein XOO1179">
    <location>
        <begin position="1"/>
        <end position="282"/>
    </location>
</feature>
<feature type="binding site" evidence="1">
    <location>
        <begin position="5"/>
        <end position="12"/>
    </location>
    <ligand>
        <name>ATP</name>
        <dbReference type="ChEBI" id="CHEBI:30616"/>
    </ligand>
</feature>
<feature type="binding site" evidence="1">
    <location>
        <begin position="57"/>
        <end position="60"/>
    </location>
    <ligand>
        <name>GTP</name>
        <dbReference type="ChEBI" id="CHEBI:37565"/>
    </ligand>
</feature>
<accession>Q2P693</accession>
<comment type="function">
    <text evidence="1">Displays ATPase and GTPase activities.</text>
</comment>
<comment type="similarity">
    <text evidence="1">Belongs to the RapZ-like family.</text>
</comment>
<gene>
    <name type="ordered locus">XOO1179</name>
</gene>
<reference key="1">
    <citation type="journal article" date="2005" name="Jpn. Agric. Res. Q.">
        <title>Genome sequence of Xanthomonas oryzae pv. oryzae suggests contribution of large numbers of effector genes and insertion sequences to its race diversity.</title>
        <authorList>
            <person name="Ochiai H."/>
            <person name="Inoue Y."/>
            <person name="Takeya M."/>
            <person name="Sasaki A."/>
            <person name="Kaku H."/>
        </authorList>
    </citation>
    <scope>NUCLEOTIDE SEQUENCE [LARGE SCALE GENOMIC DNA]</scope>
    <source>
        <strain>MAFF 311018</strain>
    </source>
</reference>
<dbReference type="EMBL" id="AP008229">
    <property type="protein sequence ID" value="BAE67934.1"/>
    <property type="molecule type" value="Genomic_DNA"/>
</dbReference>
<dbReference type="SMR" id="Q2P693"/>
<dbReference type="KEGG" id="xom:XOO1179"/>
<dbReference type="HOGENOM" id="CLU_059558_1_1_6"/>
<dbReference type="GO" id="GO:0005524">
    <property type="term" value="F:ATP binding"/>
    <property type="evidence" value="ECO:0007669"/>
    <property type="project" value="UniProtKB-UniRule"/>
</dbReference>
<dbReference type="GO" id="GO:0005525">
    <property type="term" value="F:GTP binding"/>
    <property type="evidence" value="ECO:0007669"/>
    <property type="project" value="UniProtKB-UniRule"/>
</dbReference>
<dbReference type="HAMAP" id="MF_00636">
    <property type="entry name" value="RapZ_like"/>
    <property type="match status" value="1"/>
</dbReference>
<dbReference type="InterPro" id="IPR027417">
    <property type="entry name" value="P-loop_NTPase"/>
</dbReference>
<dbReference type="InterPro" id="IPR005337">
    <property type="entry name" value="RapZ-like"/>
</dbReference>
<dbReference type="InterPro" id="IPR053930">
    <property type="entry name" value="RapZ-like_N"/>
</dbReference>
<dbReference type="InterPro" id="IPR053931">
    <property type="entry name" value="RapZ_C"/>
</dbReference>
<dbReference type="NCBIfam" id="NF003828">
    <property type="entry name" value="PRK05416.1"/>
    <property type="match status" value="1"/>
</dbReference>
<dbReference type="PANTHER" id="PTHR30448">
    <property type="entry name" value="RNASE ADAPTER PROTEIN RAPZ"/>
    <property type="match status" value="1"/>
</dbReference>
<dbReference type="PANTHER" id="PTHR30448:SF0">
    <property type="entry name" value="RNASE ADAPTER PROTEIN RAPZ"/>
    <property type="match status" value="1"/>
</dbReference>
<dbReference type="Pfam" id="PF22740">
    <property type="entry name" value="PapZ_C"/>
    <property type="match status" value="1"/>
</dbReference>
<dbReference type="Pfam" id="PF03668">
    <property type="entry name" value="RapZ-like_N"/>
    <property type="match status" value="1"/>
</dbReference>
<dbReference type="PIRSF" id="PIRSF005052">
    <property type="entry name" value="P-loopkin"/>
    <property type="match status" value="1"/>
</dbReference>
<dbReference type="SUPFAM" id="SSF52540">
    <property type="entry name" value="P-loop containing nucleoside triphosphate hydrolases"/>
    <property type="match status" value="1"/>
</dbReference>
<organism>
    <name type="scientific">Xanthomonas oryzae pv. oryzae (strain MAFF 311018)</name>
    <dbReference type="NCBI Taxonomy" id="342109"/>
    <lineage>
        <taxon>Bacteria</taxon>
        <taxon>Pseudomonadati</taxon>
        <taxon>Pseudomonadota</taxon>
        <taxon>Gammaproteobacteria</taxon>
        <taxon>Lysobacterales</taxon>
        <taxon>Lysobacteraceae</taxon>
        <taxon>Xanthomonas</taxon>
    </lineage>
</organism>
<name>Y1179_XANOM</name>
<sequence>MIVSGLSGSGKSVALKTFEDLDYYCSDNLPVELLPDFVKSRLRGNPIGNQRLAVGIDVRSRSDLTQLAQWRLAAQEYGIEALLLFFEASDEALIKRYADTRRRHPLSHLGLALPEAITRERQLTEPLRVQADAIIDTSTLNVHQFRRRVVTEFALGSNDRLSLLFESFAYKRGVPAEADFVFDARVLPNPHWDPELRPLTGRDAGVRNYLDNEADVRRYSTQIVDLLDTWLPRLRNDTRSYVTIAFGCTGGKHRSVYMAERMARHAREQGWPEVATFHREQD</sequence>